<evidence type="ECO:0000250" key="1">
    <source>
        <dbReference type="UniProtKB" id="O70404"/>
    </source>
</evidence>
<evidence type="ECO:0000250" key="2">
    <source>
        <dbReference type="UniProtKB" id="Q9BV40"/>
    </source>
</evidence>
<evidence type="ECO:0000250" key="3">
    <source>
        <dbReference type="UniProtKB" id="Q9WUF4"/>
    </source>
</evidence>
<evidence type="ECO:0000255" key="4"/>
<evidence type="ECO:0000255" key="5">
    <source>
        <dbReference type="PROSITE-ProRule" id="PRU00290"/>
    </source>
</evidence>
<evidence type="ECO:0000305" key="6"/>
<accession>Q5REQ5</accession>
<comment type="function">
    <text evidence="2">SNAREs, soluble N-ethylmaleimide-sensitive factor-attachment protein receptors, are essential proteins for fusion of cellular membranes. SNAREs localized on opposing membranes assemble to form a trans-SNARE complex, an extended, parallel four alpha-helical bundle that drives membrane fusion. VAMP8 is a SNARE involved in autophagy through the direct control of autophagosome membrane fusion with the lysososome membrane via its interaction with the STX17-SNAP29 binary t-SNARE complex. Also required for dense-granule secretion in platelets. Also plays a role in regulated enzyme secretion in pancreatic acinar cells. Involved in the abscission of the midbody during cell division, which leads to completely separate daughter cells. Involved in the homotypic fusion of early and late endosomes. Also participates in the activation of type I interferon antiviral response through a TRIM6-dependent mechanism (By similarity).</text>
</comment>
<comment type="subunit">
    <text evidence="1 2">Forms a SNARE complex composed of VAMP8, SNAP29 and STX17 involved in fusion of autophagosome with lysosome (By similarity). Found in a number of SNARE complexes with NAPA, SNAP23, SNAP25, STX1A, STX4, STX7, STX8 and VTI1B (By similarity). Interacts with PICALM (By similarity). SNARE complex formation and binding by PICALM are mutually exclusive processes for VAMP8 (By similarity). Interacts with SBF2/MTMR13 (By similarity). Interacts with RAB21 (in GTP-bound form) in response to starvation; the interaction probably regulates VAMP8 endolysosomal trafficking (By similarity). Interacts with STX17; this interaction is increased in the absence of TMEM39A (By similarity). Interacts with TRIM6 (By similarity).</text>
</comment>
<comment type="subcellular location">
    <subcellularLocation>
        <location evidence="3">Lysosome membrane</location>
        <topology evidence="6">Single-pass type IV membrane protein</topology>
    </subcellularLocation>
    <subcellularLocation>
        <location evidence="3">Late endosome membrane</location>
        <topology evidence="6">Single-pass type IV membrane protein</topology>
    </subcellularLocation>
    <subcellularLocation>
        <location evidence="3">Early endosome membrane</location>
        <topology evidence="6">Single-pass type IV membrane protein</topology>
    </subcellularLocation>
    <subcellularLocation>
        <location evidence="1">Cell membrane</location>
        <topology evidence="6">Single-pass type IV membrane protein</topology>
    </subcellularLocation>
    <subcellularLocation>
        <location evidence="1">Zymogen granule membrane</location>
        <topology evidence="6">Single-pass type IV membrane protein</topology>
    </subcellularLocation>
    <text evidence="3">Perinuclear vesicular structures of the early and late endosomes, coated pits, and trans-Golgi (By similarity). Sub-tight junctional domain in retinal pigment epithelium cells (By similarity). Midbody region during cytokinesis (By similarity). Lumenal oriented, apical membranes of nephric tubular cell (By similarity). Cycles through the apical but not through the basolateral plasma membrane (By similarity). Apical region of acinar cells; in zymogen granule membranes (By similarity).</text>
</comment>
<comment type="similarity">
    <text evidence="6">Belongs to the synaptobrevin family.</text>
</comment>
<proteinExistence type="inferred from homology"/>
<dbReference type="EMBL" id="CR857463">
    <property type="protein sequence ID" value="CAH89752.1"/>
    <property type="molecule type" value="mRNA"/>
</dbReference>
<dbReference type="RefSeq" id="NP_001124801.1">
    <property type="nucleotide sequence ID" value="NM_001131329.2"/>
</dbReference>
<dbReference type="SMR" id="Q5REQ5"/>
<dbReference type="FunCoup" id="Q5REQ5">
    <property type="interactions" value="589"/>
</dbReference>
<dbReference type="STRING" id="9601.ENSPPYP00000013635"/>
<dbReference type="Ensembl" id="ENSPPYT00000014191.3">
    <property type="protein sequence ID" value="ENSPPYP00000013636.2"/>
    <property type="gene ID" value="ENSPPYG00000012227.3"/>
</dbReference>
<dbReference type="GeneID" id="100171656"/>
<dbReference type="KEGG" id="pon:100171656"/>
<dbReference type="CTD" id="8673"/>
<dbReference type="eggNOG" id="KOG0860">
    <property type="taxonomic scope" value="Eukaryota"/>
</dbReference>
<dbReference type="GeneTree" id="ENSGT00940000160325"/>
<dbReference type="HOGENOM" id="CLU_064620_5_0_1"/>
<dbReference type="InParanoid" id="Q5REQ5"/>
<dbReference type="OMA" id="VRKKMWW"/>
<dbReference type="OrthoDB" id="190375at2759"/>
<dbReference type="Proteomes" id="UP000001595">
    <property type="component" value="Chromosome 2A"/>
</dbReference>
<dbReference type="GO" id="GO:0035577">
    <property type="term" value="C:azurophil granule membrane"/>
    <property type="evidence" value="ECO:0007669"/>
    <property type="project" value="Ensembl"/>
</dbReference>
<dbReference type="GO" id="GO:0005829">
    <property type="term" value="C:cytosol"/>
    <property type="evidence" value="ECO:0007669"/>
    <property type="project" value="Ensembl"/>
</dbReference>
<dbReference type="GO" id="GO:0031901">
    <property type="term" value="C:early endosome membrane"/>
    <property type="evidence" value="ECO:0007669"/>
    <property type="project" value="UniProtKB-SubCell"/>
</dbReference>
<dbReference type="GO" id="GO:0031902">
    <property type="term" value="C:late endosome membrane"/>
    <property type="evidence" value="ECO:0000250"/>
    <property type="project" value="UniProtKB"/>
</dbReference>
<dbReference type="GO" id="GO:0005765">
    <property type="term" value="C:lysosomal membrane"/>
    <property type="evidence" value="ECO:0000250"/>
    <property type="project" value="UniProtKB"/>
</dbReference>
<dbReference type="GO" id="GO:0005764">
    <property type="term" value="C:lysosome"/>
    <property type="evidence" value="ECO:0000250"/>
    <property type="project" value="UniProtKB"/>
</dbReference>
<dbReference type="GO" id="GO:0098594">
    <property type="term" value="C:mucin granule"/>
    <property type="evidence" value="ECO:0007669"/>
    <property type="project" value="Ensembl"/>
</dbReference>
<dbReference type="GO" id="GO:0048471">
    <property type="term" value="C:perinuclear region of cytoplasm"/>
    <property type="evidence" value="ECO:0007669"/>
    <property type="project" value="Ensembl"/>
</dbReference>
<dbReference type="GO" id="GO:0005886">
    <property type="term" value="C:plasma membrane"/>
    <property type="evidence" value="ECO:0007669"/>
    <property type="project" value="UniProtKB-SubCell"/>
</dbReference>
<dbReference type="GO" id="GO:0055037">
    <property type="term" value="C:recycling endosome"/>
    <property type="evidence" value="ECO:0007669"/>
    <property type="project" value="Ensembl"/>
</dbReference>
<dbReference type="GO" id="GO:0031201">
    <property type="term" value="C:SNARE complex"/>
    <property type="evidence" value="ECO:0000250"/>
    <property type="project" value="UniProtKB"/>
</dbReference>
<dbReference type="GO" id="GO:0042589">
    <property type="term" value="C:zymogen granule membrane"/>
    <property type="evidence" value="ECO:0007669"/>
    <property type="project" value="UniProtKB-SubCell"/>
</dbReference>
<dbReference type="GO" id="GO:0019869">
    <property type="term" value="F:chloride channel inhibitor activity"/>
    <property type="evidence" value="ECO:0007669"/>
    <property type="project" value="Ensembl"/>
</dbReference>
<dbReference type="GO" id="GO:0097352">
    <property type="term" value="P:autophagosome maturation"/>
    <property type="evidence" value="ECO:0000250"/>
    <property type="project" value="UniProtKB"/>
</dbReference>
<dbReference type="GO" id="GO:0016240">
    <property type="term" value="P:autophagosome membrane docking"/>
    <property type="evidence" value="ECO:0007669"/>
    <property type="project" value="Ensembl"/>
</dbReference>
<dbReference type="GO" id="GO:0051607">
    <property type="term" value="P:defense response to virus"/>
    <property type="evidence" value="ECO:0007669"/>
    <property type="project" value="UniProtKB-KW"/>
</dbReference>
<dbReference type="GO" id="GO:0070254">
    <property type="term" value="P:mucus secretion"/>
    <property type="evidence" value="ECO:0007669"/>
    <property type="project" value="Ensembl"/>
</dbReference>
<dbReference type="GO" id="GO:1903531">
    <property type="term" value="P:negative regulation of secretion by cell"/>
    <property type="evidence" value="ECO:0007669"/>
    <property type="project" value="Ensembl"/>
</dbReference>
<dbReference type="GO" id="GO:1903595">
    <property type="term" value="P:positive regulation of histamine secretion by mast cell"/>
    <property type="evidence" value="ECO:0007669"/>
    <property type="project" value="Ensembl"/>
</dbReference>
<dbReference type="GO" id="GO:0015031">
    <property type="term" value="P:protein transport"/>
    <property type="evidence" value="ECO:0007669"/>
    <property type="project" value="UniProtKB-KW"/>
</dbReference>
<dbReference type="GO" id="GO:1903076">
    <property type="term" value="P:regulation of protein localization to plasma membrane"/>
    <property type="evidence" value="ECO:0007669"/>
    <property type="project" value="Ensembl"/>
</dbReference>
<dbReference type="GO" id="GO:0046718">
    <property type="term" value="P:symbiont entry into host cell"/>
    <property type="evidence" value="ECO:0007669"/>
    <property type="project" value="Ensembl"/>
</dbReference>
<dbReference type="GO" id="GO:0016192">
    <property type="term" value="P:vesicle-mediated transport"/>
    <property type="evidence" value="ECO:0007669"/>
    <property type="project" value="InterPro"/>
</dbReference>
<dbReference type="CDD" id="cd15868">
    <property type="entry name" value="R-SNARE_VAMP8"/>
    <property type="match status" value="1"/>
</dbReference>
<dbReference type="FunFam" id="1.20.5.110:FF:000055">
    <property type="entry name" value="vesicle-associated membrane protein 8"/>
    <property type="match status" value="1"/>
</dbReference>
<dbReference type="Gene3D" id="1.20.5.110">
    <property type="match status" value="1"/>
</dbReference>
<dbReference type="InterPro" id="IPR001388">
    <property type="entry name" value="Synaptobrevin-like"/>
</dbReference>
<dbReference type="InterPro" id="IPR016444">
    <property type="entry name" value="Synaptobrevin/VAMP"/>
</dbReference>
<dbReference type="InterPro" id="IPR042855">
    <property type="entry name" value="V_SNARE_CC"/>
</dbReference>
<dbReference type="PANTHER" id="PTHR45701">
    <property type="entry name" value="SYNAPTOBREVIN FAMILY MEMBER"/>
    <property type="match status" value="1"/>
</dbReference>
<dbReference type="Pfam" id="PF00957">
    <property type="entry name" value="Synaptobrevin"/>
    <property type="match status" value="1"/>
</dbReference>
<dbReference type="PIRSF" id="PIRSF005409">
    <property type="entry name" value="Synaptobrevin_euk"/>
    <property type="match status" value="1"/>
</dbReference>
<dbReference type="PRINTS" id="PR00219">
    <property type="entry name" value="SYNAPTOBREVN"/>
</dbReference>
<dbReference type="SUPFAM" id="SSF58038">
    <property type="entry name" value="SNARE fusion complex"/>
    <property type="match status" value="1"/>
</dbReference>
<dbReference type="PROSITE" id="PS00417">
    <property type="entry name" value="SYNAPTOBREVIN"/>
    <property type="match status" value="1"/>
</dbReference>
<dbReference type="PROSITE" id="PS50892">
    <property type="entry name" value="V_SNARE"/>
    <property type="match status" value="1"/>
</dbReference>
<sequence>MEEASEGGGNDRVRNLQSEVEGVKNIMTQNVERILARGENLEHLRNKTEDLEATSEHFKTTSQKVARKFWWKNVKMIVLICVIVFIIILFIVLFATGAFS</sequence>
<keyword id="KW-0007">Acetylation</keyword>
<keyword id="KW-0051">Antiviral defense</keyword>
<keyword id="KW-0072">Autophagy</keyword>
<keyword id="KW-1003">Cell membrane</keyword>
<keyword id="KW-0175">Coiled coil</keyword>
<keyword id="KW-0968">Cytoplasmic vesicle</keyword>
<keyword id="KW-0967">Endosome</keyword>
<keyword id="KW-0458">Lysosome</keyword>
<keyword id="KW-0472">Membrane</keyword>
<keyword id="KW-0597">Phosphoprotein</keyword>
<keyword id="KW-0653">Protein transport</keyword>
<keyword id="KW-1185">Reference proteome</keyword>
<keyword id="KW-0812">Transmembrane</keyword>
<keyword id="KW-1133">Transmembrane helix</keyword>
<keyword id="KW-0813">Transport</keyword>
<name>VAMP8_PONAB</name>
<reference key="1">
    <citation type="submission" date="2004-11" db="EMBL/GenBank/DDBJ databases">
        <authorList>
            <consortium name="The German cDNA consortium"/>
        </authorList>
    </citation>
    <scope>NUCLEOTIDE SEQUENCE [LARGE SCALE MRNA]</scope>
    <source>
        <tissue>Kidney</tissue>
    </source>
</reference>
<feature type="chain" id="PRO_0000206738" description="Vesicle-associated membrane protein 8">
    <location>
        <begin position="1"/>
        <end position="100"/>
    </location>
</feature>
<feature type="topological domain" description="Cytoplasmic" evidence="4">
    <location>
        <begin position="1"/>
        <end position="75"/>
    </location>
</feature>
<feature type="transmembrane region" description="Helical; Anchor for type IV membrane protein" evidence="4">
    <location>
        <begin position="76"/>
        <end position="96"/>
    </location>
</feature>
<feature type="topological domain" description="Vesicular" evidence="4">
    <location>
        <begin position="97"/>
        <end position="100"/>
    </location>
</feature>
<feature type="domain" description="v-SNARE coiled-coil homology" evidence="5">
    <location>
        <begin position="12"/>
        <end position="72"/>
    </location>
</feature>
<feature type="site" description="Interaction with STX8" evidence="3">
    <location>
        <position position="33"/>
    </location>
</feature>
<feature type="modified residue" description="N-acetylmethionine" evidence="2">
    <location>
        <position position="1"/>
    </location>
</feature>
<feature type="modified residue" description="Phosphoserine" evidence="2">
    <location>
        <position position="5"/>
    </location>
</feature>
<feature type="modified residue" description="Phosphoserine" evidence="2">
    <location>
        <position position="18"/>
    </location>
</feature>
<feature type="modified residue" description="Phosphothreonine" evidence="2">
    <location>
        <position position="28"/>
    </location>
</feature>
<feature type="modified residue" description="Phosphothreonine" evidence="2">
    <location>
        <position position="48"/>
    </location>
</feature>
<feature type="modified residue" description="Phosphothreonine" evidence="2">
    <location>
        <position position="54"/>
    </location>
</feature>
<feature type="modified residue" description="Phosphoserine" evidence="2">
    <location>
        <position position="55"/>
    </location>
</feature>
<protein>
    <recommendedName>
        <fullName evidence="2">Vesicle-associated membrane protein 8</fullName>
        <shortName evidence="2">VAMP-8</shortName>
    </recommendedName>
    <alternativeName>
        <fullName evidence="2">Endobrevin</fullName>
        <shortName evidence="2">EDB</shortName>
    </alternativeName>
</protein>
<gene>
    <name evidence="2" type="primary">VAMP8</name>
</gene>
<organism>
    <name type="scientific">Pongo abelii</name>
    <name type="common">Sumatran orangutan</name>
    <name type="synonym">Pongo pygmaeus abelii</name>
    <dbReference type="NCBI Taxonomy" id="9601"/>
    <lineage>
        <taxon>Eukaryota</taxon>
        <taxon>Metazoa</taxon>
        <taxon>Chordata</taxon>
        <taxon>Craniata</taxon>
        <taxon>Vertebrata</taxon>
        <taxon>Euteleostomi</taxon>
        <taxon>Mammalia</taxon>
        <taxon>Eutheria</taxon>
        <taxon>Euarchontoglires</taxon>
        <taxon>Primates</taxon>
        <taxon>Haplorrhini</taxon>
        <taxon>Catarrhini</taxon>
        <taxon>Hominidae</taxon>
        <taxon>Pongo</taxon>
    </lineage>
</organism>